<sequence length="160" mass="17278">MTDAVLELPAATFDLPLSLSGGTQTTLRAHAGHWLVIYFYPKDSTPGCTTEGLDFNALLPEFDKAGAKILGVSRDSVKSHDNFCAKQGFAFPLVSDGDEALCRAFDVIKEKNMYGKQVLGIERSTFLLSPEGQVVQAWRKVKVAGHADAVLAALKAHAKQ</sequence>
<organism>
    <name type="scientific">Xanthomonas campestris pv. campestris (strain ATCC 33913 / DSM 3586 / NCPPB 528 / LMG 568 / P 25)</name>
    <dbReference type="NCBI Taxonomy" id="190485"/>
    <lineage>
        <taxon>Bacteria</taxon>
        <taxon>Pseudomonadati</taxon>
        <taxon>Pseudomonadota</taxon>
        <taxon>Gammaproteobacteria</taxon>
        <taxon>Lysobacterales</taxon>
        <taxon>Lysobacteraceae</taxon>
        <taxon>Xanthomonas</taxon>
    </lineage>
</organism>
<keyword id="KW-0002">3D-structure</keyword>
<keyword id="KW-0049">Antioxidant</keyword>
<keyword id="KW-1015">Disulfide bond</keyword>
<keyword id="KW-0560">Oxidoreductase</keyword>
<keyword id="KW-0575">Peroxidase</keyword>
<keyword id="KW-0676">Redox-active center</keyword>
<keyword id="KW-1185">Reference proteome</keyword>
<feature type="chain" id="PRO_0000441071" description="Peroxiredoxin Bcp">
    <location>
        <begin position="1"/>
        <end position="160"/>
    </location>
</feature>
<feature type="domain" description="Thioredoxin" evidence="1">
    <location>
        <begin position="4"/>
        <end position="159"/>
    </location>
</feature>
<feature type="active site" description="Cysteine sulfenic acid (-SOH) intermediate" evidence="5 6">
    <location>
        <position position="48"/>
    </location>
</feature>
<feature type="disulfide bond" description="Redox-active" evidence="2 3 7 13">
    <location>
        <begin position="48"/>
        <end position="84"/>
    </location>
</feature>
<feature type="mutagenesis site" description="Abolishes catalytic activity." evidence="2">
    <original>C</original>
    <variation>A</variation>
    <location>
        <position position="48"/>
    </location>
</feature>
<feature type="mutagenesis site" description="Abolishes catalytic activity." evidence="2">
    <original>C</original>
    <variation>S</variation>
    <location>
        <position position="84"/>
    </location>
</feature>
<feature type="helix" evidence="14">
    <location>
        <begin position="10"/>
        <end position="14"/>
    </location>
</feature>
<feature type="strand" evidence="14">
    <location>
        <begin position="17"/>
        <end position="19"/>
    </location>
</feature>
<feature type="helix" evidence="14">
    <location>
        <begin position="28"/>
        <end position="30"/>
    </location>
</feature>
<feature type="strand" evidence="14">
    <location>
        <begin position="35"/>
        <end position="39"/>
    </location>
</feature>
<feature type="helix" evidence="14">
    <location>
        <begin position="46"/>
        <end position="57"/>
    </location>
</feature>
<feature type="helix" evidence="14">
    <location>
        <begin position="59"/>
        <end position="64"/>
    </location>
</feature>
<feature type="strand" evidence="14">
    <location>
        <begin position="68"/>
        <end position="74"/>
    </location>
</feature>
<feature type="helix" evidence="14">
    <location>
        <begin position="77"/>
        <end position="87"/>
    </location>
</feature>
<feature type="strand" evidence="14">
    <location>
        <begin position="93"/>
        <end position="95"/>
    </location>
</feature>
<feature type="helix" evidence="14">
    <location>
        <begin position="100"/>
        <end position="104"/>
    </location>
</feature>
<feature type="strand" evidence="14">
    <location>
        <begin position="108"/>
        <end position="113"/>
    </location>
</feature>
<feature type="strand" evidence="14">
    <location>
        <begin position="116"/>
        <end position="121"/>
    </location>
</feature>
<feature type="strand" evidence="14">
    <location>
        <begin position="124"/>
        <end position="128"/>
    </location>
</feature>
<feature type="strand" evidence="14">
    <location>
        <begin position="134"/>
        <end position="140"/>
    </location>
</feature>
<feature type="helix" evidence="14">
    <location>
        <begin position="146"/>
        <end position="157"/>
    </location>
</feature>
<comment type="function">
    <text evidence="2">Thiol-specific peroxidase that catalyzes the reduction of hydrogen peroxide and organic hydroperoxides to water and alcohols, respectively. Plays a role in cell protection against oxidative stress by detoxifying peroxides and as sensor of hydrogen peroxide-mediated signaling events.</text>
</comment>
<comment type="catalytic activity">
    <reaction evidence="2 3">
        <text>a hydroperoxide + [thioredoxin]-dithiol = an alcohol + [thioredoxin]-disulfide + H2O</text>
        <dbReference type="Rhea" id="RHEA:62620"/>
        <dbReference type="Rhea" id="RHEA-COMP:10698"/>
        <dbReference type="Rhea" id="RHEA-COMP:10700"/>
        <dbReference type="ChEBI" id="CHEBI:15377"/>
        <dbReference type="ChEBI" id="CHEBI:29950"/>
        <dbReference type="ChEBI" id="CHEBI:30879"/>
        <dbReference type="ChEBI" id="CHEBI:35924"/>
        <dbReference type="ChEBI" id="CHEBI:50058"/>
        <dbReference type="EC" id="1.11.1.24"/>
    </reaction>
</comment>
<comment type="biophysicochemical properties">
    <kinetics>
        <KM evidence="3">786 uM for H(2)O(2)</KM>
        <KM evidence="3">1840 uM for cumene hydroperoxide</KM>
        <KM evidence="3">293 uM for TrxA (using H(2)O(2) as substrate)</KM>
        <KM evidence="3">414 uM for TrxA (using cumene hydroperoxide as substrate)</KM>
    </kinetics>
</comment>
<comment type="subunit">
    <text evidence="2">Monomer.</text>
</comment>
<comment type="miscellaneous">
    <text evidence="5">The active site is a conserved redox-active cysteine residue, the peroxidatic cysteine (C(P)), which makes the nucleophilic attack on the peroxide substrate. The peroxide oxidizes the C(P)-SH to cysteine sulfenic acid (C(P)-SOH), which then reacts with another cysteine residue, the resolving cysteine (C(R)), to form a disulfide bridge. The disulfide is subsequently reduced by an appropriate electron donor to complete the catalytic cycle. In this atypical 2-Cys peroxiredoxin, C(R) is present in the same subunit to form an intramolecular disulfide. The disulfide is subsequently reduced by thioredoxin.</text>
</comment>
<comment type="similarity">
    <text evidence="4">Belongs to the peroxiredoxin family. BCP/PrxQ subfamily.</text>
</comment>
<name>BCP_XANCP</name>
<dbReference type="EC" id="1.11.1.24" evidence="2 3"/>
<dbReference type="EMBL" id="AE008922">
    <property type="protein sequence ID" value="AAM41029.1"/>
    <property type="molecule type" value="Genomic_DNA"/>
</dbReference>
<dbReference type="RefSeq" id="NP_637105.1">
    <property type="nucleotide sequence ID" value="NC_003902.1"/>
</dbReference>
<dbReference type="RefSeq" id="WP_011036912.1">
    <property type="nucleotide sequence ID" value="NC_003902.1"/>
</dbReference>
<dbReference type="PDB" id="3GKK">
    <property type="method" value="X-ray"/>
    <property type="resolution" value="1.83 A"/>
    <property type="chains" value="A=1-160"/>
</dbReference>
<dbReference type="PDB" id="3GKM">
    <property type="method" value="X-ray"/>
    <property type="resolution" value="1.53 A"/>
    <property type="chains" value="A=1-160"/>
</dbReference>
<dbReference type="PDB" id="3GKN">
    <property type="method" value="X-ray"/>
    <property type="resolution" value="1.47 A"/>
    <property type="chains" value="A/B=1-160"/>
</dbReference>
<dbReference type="PDB" id="5IM9">
    <property type="method" value="X-ray"/>
    <property type="resolution" value="1.10 A"/>
    <property type="chains" value="A=2-160"/>
</dbReference>
<dbReference type="PDB" id="5IMA">
    <property type="method" value="X-ray"/>
    <property type="resolution" value="1.04 A"/>
    <property type="chains" value="A=2-160"/>
</dbReference>
<dbReference type="PDB" id="5IMC">
    <property type="method" value="X-ray"/>
    <property type="resolution" value="1.05 A"/>
    <property type="chains" value="A=2-160"/>
</dbReference>
<dbReference type="PDB" id="5IMD">
    <property type="method" value="X-ray"/>
    <property type="resolution" value="1.16 A"/>
    <property type="chains" value="A=2-160"/>
</dbReference>
<dbReference type="PDB" id="5IMF">
    <property type="method" value="X-ray"/>
    <property type="resolution" value="1.04 A"/>
    <property type="chains" value="A=2-160"/>
</dbReference>
<dbReference type="PDB" id="5IMV">
    <property type="method" value="X-ray"/>
    <property type="resolution" value="1.05 A"/>
    <property type="chains" value="A=2-160"/>
</dbReference>
<dbReference type="PDB" id="5IMZ">
    <property type="method" value="X-ray"/>
    <property type="resolution" value="1.10 A"/>
    <property type="chains" value="A=2-160"/>
</dbReference>
<dbReference type="PDB" id="5INY">
    <property type="method" value="X-ray"/>
    <property type="resolution" value="1.04 A"/>
    <property type="chains" value="A=2-160"/>
</dbReference>
<dbReference type="PDB" id="5IO0">
    <property type="method" value="X-ray"/>
    <property type="resolution" value="1.30 A"/>
    <property type="chains" value="A=2-160"/>
</dbReference>
<dbReference type="PDB" id="5IO2">
    <property type="method" value="X-ray"/>
    <property type="resolution" value="1.20 A"/>
    <property type="chains" value="A=2-160"/>
</dbReference>
<dbReference type="PDB" id="5IOW">
    <property type="method" value="X-ray"/>
    <property type="resolution" value="1.35 A"/>
    <property type="chains" value="A=2-160"/>
</dbReference>
<dbReference type="PDB" id="5IOX">
    <property type="method" value="X-ray"/>
    <property type="resolution" value="1.30 A"/>
    <property type="chains" value="A=1-160"/>
</dbReference>
<dbReference type="PDB" id="5IPG">
    <property type="method" value="X-ray"/>
    <property type="resolution" value="1.35 A"/>
    <property type="chains" value="A=1-160"/>
</dbReference>
<dbReference type="PDB" id="5IPH">
    <property type="method" value="X-ray"/>
    <property type="resolution" value="1.30 A"/>
    <property type="chains" value="A=2-160"/>
</dbReference>
<dbReference type="PDBsum" id="3GKK"/>
<dbReference type="PDBsum" id="3GKM"/>
<dbReference type="PDBsum" id="3GKN"/>
<dbReference type="PDBsum" id="5IM9"/>
<dbReference type="PDBsum" id="5IMA"/>
<dbReference type="PDBsum" id="5IMC"/>
<dbReference type="PDBsum" id="5IMD"/>
<dbReference type="PDBsum" id="5IMF"/>
<dbReference type="PDBsum" id="5IMV"/>
<dbReference type="PDBsum" id="5IMZ"/>
<dbReference type="PDBsum" id="5INY"/>
<dbReference type="PDBsum" id="5IO0"/>
<dbReference type="PDBsum" id="5IO2"/>
<dbReference type="PDBsum" id="5IOW"/>
<dbReference type="PDBsum" id="5IOX"/>
<dbReference type="PDBsum" id="5IPG"/>
<dbReference type="PDBsum" id="5IPH"/>
<dbReference type="SMR" id="Q8P9V9"/>
<dbReference type="STRING" id="190485.XCC1738"/>
<dbReference type="DrugBank" id="DB04640">
    <property type="generic name" value="Naphthalene-2,6-disulfonic acid"/>
</dbReference>
<dbReference type="EnsemblBacteria" id="AAM41029">
    <property type="protein sequence ID" value="AAM41029"/>
    <property type="gene ID" value="XCC1738"/>
</dbReference>
<dbReference type="KEGG" id="xcc:XCC1738"/>
<dbReference type="PATRIC" id="fig|190485.4.peg.1853"/>
<dbReference type="eggNOG" id="COG1225">
    <property type="taxonomic scope" value="Bacteria"/>
</dbReference>
<dbReference type="HOGENOM" id="CLU_042529_14_1_6"/>
<dbReference type="OrthoDB" id="9812811at2"/>
<dbReference type="EvolutionaryTrace" id="Q8P9V9"/>
<dbReference type="Proteomes" id="UP000001010">
    <property type="component" value="Chromosome"/>
</dbReference>
<dbReference type="GO" id="GO:0005737">
    <property type="term" value="C:cytoplasm"/>
    <property type="evidence" value="ECO:0000318"/>
    <property type="project" value="GO_Central"/>
</dbReference>
<dbReference type="GO" id="GO:0008379">
    <property type="term" value="F:thioredoxin peroxidase activity"/>
    <property type="evidence" value="ECO:0000318"/>
    <property type="project" value="GO_Central"/>
</dbReference>
<dbReference type="GO" id="GO:0045454">
    <property type="term" value="P:cell redox homeostasis"/>
    <property type="evidence" value="ECO:0000318"/>
    <property type="project" value="GO_Central"/>
</dbReference>
<dbReference type="GO" id="GO:0034599">
    <property type="term" value="P:cellular response to oxidative stress"/>
    <property type="evidence" value="ECO:0000318"/>
    <property type="project" value="GO_Central"/>
</dbReference>
<dbReference type="CDD" id="cd03017">
    <property type="entry name" value="PRX_BCP"/>
    <property type="match status" value="1"/>
</dbReference>
<dbReference type="FunFam" id="3.40.30.10:FF:000007">
    <property type="entry name" value="Thioredoxin-dependent thiol peroxidase"/>
    <property type="match status" value="1"/>
</dbReference>
<dbReference type="Gene3D" id="3.40.30.10">
    <property type="entry name" value="Glutaredoxin"/>
    <property type="match status" value="1"/>
</dbReference>
<dbReference type="InterPro" id="IPR000866">
    <property type="entry name" value="AhpC/TSA"/>
</dbReference>
<dbReference type="InterPro" id="IPR050924">
    <property type="entry name" value="Peroxiredoxin_BCP/PrxQ"/>
</dbReference>
<dbReference type="InterPro" id="IPR036249">
    <property type="entry name" value="Thioredoxin-like_sf"/>
</dbReference>
<dbReference type="InterPro" id="IPR013766">
    <property type="entry name" value="Thioredoxin_domain"/>
</dbReference>
<dbReference type="PANTHER" id="PTHR42801:SF4">
    <property type="entry name" value="AHPC_TSA FAMILY PROTEIN"/>
    <property type="match status" value="1"/>
</dbReference>
<dbReference type="PANTHER" id="PTHR42801">
    <property type="entry name" value="THIOREDOXIN-DEPENDENT PEROXIDE REDUCTASE"/>
    <property type="match status" value="1"/>
</dbReference>
<dbReference type="Pfam" id="PF00578">
    <property type="entry name" value="AhpC-TSA"/>
    <property type="match status" value="1"/>
</dbReference>
<dbReference type="SUPFAM" id="SSF52833">
    <property type="entry name" value="Thioredoxin-like"/>
    <property type="match status" value="1"/>
</dbReference>
<dbReference type="PROSITE" id="PS51352">
    <property type="entry name" value="THIOREDOXIN_2"/>
    <property type="match status" value="1"/>
</dbReference>
<proteinExistence type="evidence at protein level"/>
<accession>Q8P9V9</accession>
<protein>
    <recommendedName>
        <fullName>Peroxiredoxin Bcp</fullName>
        <ecNumber evidence="2 3">1.11.1.24</ecNumber>
    </recommendedName>
    <alternativeName>
        <fullName>Bacterioferritin comigratory protein</fullName>
    </alternativeName>
    <alternativeName>
        <fullName>Thioredoxin peroxidase</fullName>
    </alternativeName>
    <alternativeName>
        <fullName evidence="4">Thioredoxin-dependent peroxiredoxin Bcp</fullName>
    </alternativeName>
</protein>
<reference key="1">
    <citation type="journal article" date="2002" name="Nature">
        <title>Comparison of the genomes of two Xanthomonas pathogens with differing host specificities.</title>
        <authorList>
            <person name="da Silva A.C.R."/>
            <person name="Ferro J.A."/>
            <person name="Reinach F.C."/>
            <person name="Farah C.S."/>
            <person name="Furlan L.R."/>
            <person name="Quaggio R.B."/>
            <person name="Monteiro-Vitorello C.B."/>
            <person name="Van Sluys M.A."/>
            <person name="Almeida N.F. Jr."/>
            <person name="Alves L.M.C."/>
            <person name="do Amaral A.M."/>
            <person name="Bertolini M.C."/>
            <person name="Camargo L.E.A."/>
            <person name="Camarotte G."/>
            <person name="Cannavan F."/>
            <person name="Cardozo J."/>
            <person name="Chambergo F."/>
            <person name="Ciapina L.P."/>
            <person name="Cicarelli R.M.B."/>
            <person name="Coutinho L.L."/>
            <person name="Cursino-Santos J.R."/>
            <person name="El-Dorry H."/>
            <person name="Faria J.B."/>
            <person name="Ferreira A.J.S."/>
            <person name="Ferreira R.C.C."/>
            <person name="Ferro M.I.T."/>
            <person name="Formighieri E.F."/>
            <person name="Franco M.C."/>
            <person name="Greggio C.C."/>
            <person name="Gruber A."/>
            <person name="Katsuyama A.M."/>
            <person name="Kishi L.T."/>
            <person name="Leite R.P."/>
            <person name="Lemos E.G.M."/>
            <person name="Lemos M.V.F."/>
            <person name="Locali E.C."/>
            <person name="Machado M.A."/>
            <person name="Madeira A.M.B.N."/>
            <person name="Martinez-Rossi N.M."/>
            <person name="Martins E.C."/>
            <person name="Meidanis J."/>
            <person name="Menck C.F.M."/>
            <person name="Miyaki C.Y."/>
            <person name="Moon D.H."/>
            <person name="Moreira L.M."/>
            <person name="Novo M.T.M."/>
            <person name="Okura V.K."/>
            <person name="Oliveira M.C."/>
            <person name="Oliveira V.R."/>
            <person name="Pereira H.A."/>
            <person name="Rossi A."/>
            <person name="Sena J.A.D."/>
            <person name="Silva C."/>
            <person name="de Souza R.F."/>
            <person name="Spinola L.A.F."/>
            <person name="Takita M.A."/>
            <person name="Tamura R.E."/>
            <person name="Teixeira E.C."/>
            <person name="Tezza R.I.D."/>
            <person name="Trindade dos Santos M."/>
            <person name="Truffi D."/>
            <person name="Tsai S.M."/>
            <person name="White F.F."/>
            <person name="Setubal J.C."/>
            <person name="Kitajima J.P."/>
        </authorList>
    </citation>
    <scope>NUCLEOTIDE SEQUENCE [LARGE SCALE GENOMIC DNA]</scope>
    <source>
        <strain>ATCC 33913 / DSM 3586 / NCPPB 528 / LMG 568 / P 25</strain>
    </source>
</reference>
<reference evidence="7 8 9" key="2">
    <citation type="journal article" date="2009" name="J. Mol. Biol.">
        <title>Insights into the alkyl peroxide reduction pathway of Xanthomonas campestris bacterioferritin comigratory protein from the trapped intermediate-ligand complex structures.</title>
        <authorList>
            <person name="Liao S.J."/>
            <person name="Yang C.Y."/>
            <person name="Chin K.H."/>
            <person name="Wang A.H."/>
            <person name="Chou S.H."/>
        </authorList>
    </citation>
    <scope>X-RAY CRYSTALLOGRAPHY (1.47 ANGSTROMS)</scope>
    <scope>DISULFIDE BOND</scope>
    <scope>FUNCTION</scope>
    <scope>CATALYTIC ACTIVITY</scope>
    <scope>SUBUNIT</scope>
    <scope>MUTAGENESIS OF CYS-48 AND CYS-84</scope>
</reference>
<reference evidence="10 11 12" key="3">
    <citation type="journal article" date="2016" name="Structure">
        <title>Peroxiredoxin catalysis at atomic resolution.</title>
        <authorList>
            <person name="Perkins A."/>
            <person name="Parsonage D."/>
            <person name="Nelson K.J."/>
            <person name="Ogba O.M."/>
            <person name="Cheong P.H."/>
            <person name="Poole L.B."/>
            <person name="Karplus P.A."/>
        </authorList>
    </citation>
    <scope>X-RAY CRYSTALLOGRAPHY (1.04 ANGSTROMS) OF 2-160</scope>
    <scope>DISULFIDE BOND</scope>
    <scope>CATALYTIC ACTIVITY</scope>
    <scope>BIOPHYSICOCHEMICAL PROPERTIES</scope>
</reference>
<gene>
    <name type="primary">bcp</name>
    <name type="ordered locus">XCC1738</name>
</gene>
<evidence type="ECO:0000255" key="1">
    <source>
        <dbReference type="PROSITE-ProRule" id="PRU00691"/>
    </source>
</evidence>
<evidence type="ECO:0000269" key="2">
    <source>
    </source>
</evidence>
<evidence type="ECO:0000269" key="3">
    <source>
    </source>
</evidence>
<evidence type="ECO:0000305" key="4"/>
<evidence type="ECO:0000305" key="5">
    <source>
    </source>
</evidence>
<evidence type="ECO:0000305" key="6">
    <source>
    </source>
</evidence>
<evidence type="ECO:0007744" key="7">
    <source>
        <dbReference type="PDB" id="3GKK"/>
    </source>
</evidence>
<evidence type="ECO:0007744" key="8">
    <source>
        <dbReference type="PDB" id="3GKM"/>
    </source>
</evidence>
<evidence type="ECO:0007744" key="9">
    <source>
        <dbReference type="PDB" id="3GKN"/>
    </source>
</evidence>
<evidence type="ECO:0007744" key="10">
    <source>
        <dbReference type="PDB" id="5IM9"/>
    </source>
</evidence>
<evidence type="ECO:0007744" key="11">
    <source>
        <dbReference type="PDB" id="5IMA"/>
    </source>
</evidence>
<evidence type="ECO:0007744" key="12">
    <source>
        <dbReference type="PDB" id="5IMC"/>
    </source>
</evidence>
<evidence type="ECO:0007744" key="13">
    <source>
        <dbReference type="PDB" id="5IOX"/>
    </source>
</evidence>
<evidence type="ECO:0007829" key="14">
    <source>
        <dbReference type="PDB" id="5IMA"/>
    </source>
</evidence>